<comment type="function">
    <text evidence="1">Catalyzes the formation of CDP-2,3-bis-(O-geranylgeranyl)-sn-glycerol (CDP-archaeol) from 2,3-bis-(O-geranylgeranyl)-sn-glycerol 1-phosphate (DGGGP) and CTP. This reaction is the third ether-bond-formation step in the biosynthesis of archaeal membrane lipids.</text>
</comment>
<comment type="catalytic activity">
    <reaction evidence="1">
        <text>2,3-bis-O-(geranylgeranyl)-sn-glycerol 1-phosphate + CTP + H(+) = CDP-2,3-bis-O-(geranylgeranyl)-sn-glycerol + diphosphate</text>
        <dbReference type="Rhea" id="RHEA:25690"/>
        <dbReference type="ChEBI" id="CHEBI:15378"/>
        <dbReference type="ChEBI" id="CHEBI:33019"/>
        <dbReference type="ChEBI" id="CHEBI:37563"/>
        <dbReference type="ChEBI" id="CHEBI:58837"/>
        <dbReference type="ChEBI" id="CHEBI:58838"/>
        <dbReference type="EC" id="2.7.7.67"/>
    </reaction>
</comment>
<comment type="cofactor">
    <cofactor evidence="1">
        <name>Mg(2+)</name>
        <dbReference type="ChEBI" id="CHEBI:18420"/>
    </cofactor>
</comment>
<comment type="pathway">
    <text evidence="1">Membrane lipid metabolism; glycerophospholipid metabolism.</text>
</comment>
<comment type="subcellular location">
    <subcellularLocation>
        <location evidence="1">Cell membrane</location>
        <topology evidence="1">Multi-pass membrane protein</topology>
    </subcellularLocation>
</comment>
<comment type="similarity">
    <text evidence="1">Belongs to the CDP-archaeol synthase family.</text>
</comment>
<keyword id="KW-1003">Cell membrane</keyword>
<keyword id="KW-0444">Lipid biosynthesis</keyword>
<keyword id="KW-0443">Lipid metabolism</keyword>
<keyword id="KW-0460">Magnesium</keyword>
<keyword id="KW-0472">Membrane</keyword>
<keyword id="KW-0594">Phospholipid biosynthesis</keyword>
<keyword id="KW-1208">Phospholipid metabolism</keyword>
<keyword id="KW-0808">Transferase</keyword>
<keyword id="KW-0812">Transmembrane</keyword>
<keyword id="KW-1133">Transmembrane helix</keyword>
<proteinExistence type="inferred from homology"/>
<protein>
    <recommendedName>
        <fullName evidence="1">CDP-archaeol synthase</fullName>
        <ecNumber evidence="1">2.7.7.67</ecNumber>
    </recommendedName>
    <alternativeName>
        <fullName evidence="1">CDP-2,3-bis-(O-geranylgeranyl)-sn-glycerol synthase</fullName>
    </alternativeName>
</protein>
<reference key="1">
    <citation type="submission" date="2007-02" db="EMBL/GenBank/DDBJ databases">
        <title>Complete sequence of Pyrobaculum calidifontis JCM 11548.</title>
        <authorList>
            <consortium name="US DOE Joint Genome Institute"/>
            <person name="Copeland A."/>
            <person name="Lucas S."/>
            <person name="Lapidus A."/>
            <person name="Barry K."/>
            <person name="Glavina del Rio T."/>
            <person name="Dalin E."/>
            <person name="Tice H."/>
            <person name="Pitluck S."/>
            <person name="Chain P."/>
            <person name="Malfatti S."/>
            <person name="Shin M."/>
            <person name="Vergez L."/>
            <person name="Schmutz J."/>
            <person name="Larimer F."/>
            <person name="Land M."/>
            <person name="Hauser L."/>
            <person name="Kyrpides N."/>
            <person name="Mikhailova N."/>
            <person name="Cozen A.E."/>
            <person name="Fitz-Gibbon S.T."/>
            <person name="House C.H."/>
            <person name="Saltikov C."/>
            <person name="Lowe T.M."/>
            <person name="Richardson P."/>
        </authorList>
    </citation>
    <scope>NUCLEOTIDE SEQUENCE [LARGE SCALE GENOMIC DNA]</scope>
    <source>
        <strain>DSM 21063 / JCM 11548 / VA1</strain>
    </source>
</reference>
<feature type="chain" id="PRO_0000298286" description="CDP-archaeol synthase">
    <location>
        <begin position="1"/>
        <end position="165"/>
    </location>
</feature>
<feature type="transmembrane region" description="Helical" evidence="1">
    <location>
        <begin position="4"/>
        <end position="24"/>
    </location>
</feature>
<feature type="transmembrane region" description="Helical" evidence="1">
    <location>
        <begin position="78"/>
        <end position="98"/>
    </location>
</feature>
<feature type="transmembrane region" description="Helical" evidence="1">
    <location>
        <begin position="118"/>
        <end position="138"/>
    </location>
</feature>
<accession>A3MXY4</accession>
<name>CDPAS_PYRCJ</name>
<sequence>MNEIVQLFLLIWPPYVANGSAVLAARLRRRHPLDFGKNFLDGRRIFGDGKTFEGVAIGVSAGTLLGYAPNLAYSYLTLLDAFLLATAAIVGDLLGAFVKRRLCMPRGYPAFPLDQLDFLLMALLVYSLYRELHIPLLLAAVVLTPVIHRATNYAAYKLRLKKEPW</sequence>
<gene>
    <name evidence="1" type="primary">carS</name>
    <name type="ordered locus">Pcal_2086</name>
</gene>
<organism>
    <name type="scientific">Pyrobaculum calidifontis (strain DSM 21063 / JCM 11548 / VA1)</name>
    <dbReference type="NCBI Taxonomy" id="410359"/>
    <lineage>
        <taxon>Archaea</taxon>
        <taxon>Thermoproteota</taxon>
        <taxon>Thermoprotei</taxon>
        <taxon>Thermoproteales</taxon>
        <taxon>Thermoproteaceae</taxon>
        <taxon>Pyrobaculum</taxon>
    </lineage>
</organism>
<dbReference type="EC" id="2.7.7.67" evidence="1"/>
<dbReference type="EMBL" id="CP000561">
    <property type="protein sequence ID" value="ABO09501.1"/>
    <property type="molecule type" value="Genomic_DNA"/>
</dbReference>
<dbReference type="RefSeq" id="WP_011850759.1">
    <property type="nucleotide sequence ID" value="NC_009073.1"/>
</dbReference>
<dbReference type="SMR" id="A3MXY4"/>
<dbReference type="STRING" id="410359.Pcal_2086"/>
<dbReference type="GeneID" id="4909874"/>
<dbReference type="KEGG" id="pcl:Pcal_2086"/>
<dbReference type="eggNOG" id="arCOG04106">
    <property type="taxonomic scope" value="Archaea"/>
</dbReference>
<dbReference type="HOGENOM" id="CLU_105710_0_0_2"/>
<dbReference type="OrthoDB" id="45383at2157"/>
<dbReference type="UniPathway" id="UPA00940"/>
<dbReference type="Proteomes" id="UP000001431">
    <property type="component" value="Chromosome"/>
</dbReference>
<dbReference type="GO" id="GO:0005886">
    <property type="term" value="C:plasma membrane"/>
    <property type="evidence" value="ECO:0007669"/>
    <property type="project" value="UniProtKB-SubCell"/>
</dbReference>
<dbReference type="GO" id="GO:0043338">
    <property type="term" value="F:CDP-2,3-bis-(O-geranylgeranyl)-sn-glycerol synthase activity"/>
    <property type="evidence" value="ECO:0007669"/>
    <property type="project" value="UniProtKB-EC"/>
</dbReference>
<dbReference type="GO" id="GO:0046474">
    <property type="term" value="P:glycerophospholipid biosynthetic process"/>
    <property type="evidence" value="ECO:0007669"/>
    <property type="project" value="UniProtKB-UniRule"/>
</dbReference>
<dbReference type="HAMAP" id="MF_01117">
    <property type="entry name" value="CDP_archaeol_synth"/>
    <property type="match status" value="1"/>
</dbReference>
<dbReference type="InterPro" id="IPR032690">
    <property type="entry name" value="CarS"/>
</dbReference>
<dbReference type="InterPro" id="IPR002726">
    <property type="entry name" value="CarS_archaea"/>
</dbReference>
<dbReference type="NCBIfam" id="NF003114">
    <property type="entry name" value="PRK04032.1"/>
    <property type="match status" value="1"/>
</dbReference>
<dbReference type="PANTHER" id="PTHR39650">
    <property type="entry name" value="CDP-ARCHAEOL SYNTHASE"/>
    <property type="match status" value="1"/>
</dbReference>
<dbReference type="PANTHER" id="PTHR39650:SF1">
    <property type="entry name" value="CDP-ARCHAEOL SYNTHASE"/>
    <property type="match status" value="1"/>
</dbReference>
<dbReference type="Pfam" id="PF01864">
    <property type="entry name" value="CarS-like"/>
    <property type="match status" value="1"/>
</dbReference>
<evidence type="ECO:0000255" key="1">
    <source>
        <dbReference type="HAMAP-Rule" id="MF_01117"/>
    </source>
</evidence>